<feature type="chain" id="PRO_0000144629" description="V-type proton ATPase subunit B, brain isoform">
    <location>
        <begin position="1"/>
        <end position="511"/>
    </location>
</feature>
<feature type="binding site" evidence="5 6 7 9 10 12 13">
    <location>
        <position position="400"/>
    </location>
    <ligand>
        <name>ATP</name>
        <dbReference type="ChEBI" id="CHEBI:30616"/>
    </ligand>
</feature>
<proteinExistence type="evidence at protein level"/>
<comment type="function">
    <text evidence="2 3">Non-catalytic subunit of the V1 complex of vacuolar(H+)-ATPase (V-ATPase), a multisubunit enzyme composed of a peripheral complex (V1) that hydrolyzes ATP and a membrane integral complex (V0) that translocates protons (PubMed:32165585). V-ATPase is responsible for acidifying and maintaining the pH of intracellular compartments and in some cell types, is targeted to the plasma membrane, where it is responsible for acidifying the extracellular environment (PubMed:32165585). In renal intercalated cells, can partially compensate the lack of ATP6V1B1 and mediate secretion of protons (H+) into the urine under base-line conditions but not in conditions of acid load (By similarity).</text>
</comment>
<comment type="subunit">
    <text evidence="3">V-ATPase is a heteromultimeric enzyme made up of two complexes: the ATP-hydrolytic V1 complex and the proton translocation V0 complex (PubMed:32165585). The V1 complex consists of three catalytic AB heterodimers that form a heterohexamer, three peripheral stalks each consisting of EG heterodimers, one central rotor including subunits D and F, and the regulatory subunits C and H (PubMed:32165585). The proton translocation complex V0 consists of the proton transport subunit a, a ring of proteolipid subunits c9c'', rotary subunit d, subunits e and f, and the accessory subunits ATP6AP1/Ac45 and ATP6AP2/PRR (PubMed:32165585).</text>
</comment>
<comment type="subcellular location">
    <subcellularLocation>
        <location evidence="1">Apical cell membrane</location>
    </subcellularLocation>
    <subcellularLocation>
        <location evidence="1">Melanosome</location>
    </subcellularLocation>
    <subcellularLocation>
        <location evidence="2">Cytoplasm</location>
    </subcellularLocation>
    <subcellularLocation>
        <location evidence="3">Cytoplasmic vesicle</location>
        <location evidence="3">Secretory vesicle</location>
        <location evidence="3">Synaptic vesicle membrane</location>
        <topology evidence="4">Peripheral membrane protein</topology>
    </subcellularLocation>
    <subcellularLocation>
        <location evidence="3">Cytoplasmic vesicle</location>
        <location evidence="3">Clathrin-coated vesicle membrane</location>
        <topology evidence="4">Peripheral membrane protein</topology>
    </subcellularLocation>
</comment>
<comment type="tissue specificity">
    <text evidence="3">Expressed in brain (at protein level).</text>
</comment>
<comment type="similarity">
    <text evidence="4">Belongs to the ATPase alpha/beta chains family.</text>
</comment>
<keyword id="KW-0002">3D-structure</keyword>
<keyword id="KW-0067">ATP-binding</keyword>
<keyword id="KW-1003">Cell membrane</keyword>
<keyword id="KW-0963">Cytoplasm</keyword>
<keyword id="KW-0968">Cytoplasmic vesicle</keyword>
<keyword id="KW-0903">Direct protein sequencing</keyword>
<keyword id="KW-0375">Hydrogen ion transport</keyword>
<keyword id="KW-0406">Ion transport</keyword>
<keyword id="KW-0472">Membrane</keyword>
<keyword id="KW-0547">Nucleotide-binding</keyword>
<keyword id="KW-1185">Reference proteome</keyword>
<keyword id="KW-0770">Synapse</keyword>
<keyword id="KW-0813">Transport</keyword>
<evidence type="ECO:0000250" key="1">
    <source>
        <dbReference type="UniProtKB" id="P21281"/>
    </source>
</evidence>
<evidence type="ECO:0000250" key="2">
    <source>
        <dbReference type="UniProtKB" id="P62814"/>
    </source>
</evidence>
<evidence type="ECO:0000269" key="3">
    <source>
    </source>
</evidence>
<evidence type="ECO:0000305" key="4"/>
<evidence type="ECO:0000305" key="5">
    <source>
    </source>
</evidence>
<evidence type="ECO:0000312" key="6">
    <source>
        <dbReference type="PDB" id="6VQ6"/>
    </source>
</evidence>
<evidence type="ECO:0000312" key="7">
    <source>
        <dbReference type="PDB" id="6VQ9"/>
    </source>
</evidence>
<evidence type="ECO:0007744" key="8">
    <source>
        <dbReference type="PDB" id="6VQ6"/>
    </source>
</evidence>
<evidence type="ECO:0007744" key="9">
    <source>
        <dbReference type="PDB" id="6VQ7"/>
    </source>
</evidence>
<evidence type="ECO:0007744" key="10">
    <source>
        <dbReference type="PDB" id="6VQ8"/>
    </source>
</evidence>
<evidence type="ECO:0007744" key="11">
    <source>
        <dbReference type="PDB" id="6VQ9"/>
    </source>
</evidence>
<evidence type="ECO:0007744" key="12">
    <source>
        <dbReference type="PDB" id="6VQA"/>
    </source>
</evidence>
<evidence type="ECO:0007744" key="13">
    <source>
        <dbReference type="PDB" id="6VQB"/>
    </source>
</evidence>
<dbReference type="EMBL" id="Y12635">
    <property type="protein sequence ID" value="CAA73183.1"/>
    <property type="molecule type" value="mRNA"/>
</dbReference>
<dbReference type="EMBL" id="BC085714">
    <property type="protein sequence ID" value="AAH85714.1"/>
    <property type="molecule type" value="mRNA"/>
</dbReference>
<dbReference type="RefSeq" id="NP_476561.1">
    <property type="nucleotide sequence ID" value="NM_057213.2"/>
</dbReference>
<dbReference type="PDB" id="6VQ6">
    <property type="method" value="EM"/>
    <property type="resolution" value="3.90 A"/>
    <property type="chains" value="D/E/F=1-511"/>
</dbReference>
<dbReference type="PDB" id="6VQ7">
    <property type="method" value="EM"/>
    <property type="resolution" value="4.00 A"/>
    <property type="chains" value="D/E/F=1-511"/>
</dbReference>
<dbReference type="PDB" id="6VQ8">
    <property type="method" value="EM"/>
    <property type="resolution" value="3.90 A"/>
    <property type="chains" value="D/E/F=1-511"/>
</dbReference>
<dbReference type="PDB" id="6VQ9">
    <property type="method" value="EM"/>
    <property type="resolution" value="3.60 A"/>
    <property type="chains" value="D/E/F=1-511"/>
</dbReference>
<dbReference type="PDB" id="6VQA">
    <property type="method" value="EM"/>
    <property type="resolution" value="3.70 A"/>
    <property type="chains" value="D/E/F=1-511"/>
</dbReference>
<dbReference type="PDB" id="6VQB">
    <property type="method" value="EM"/>
    <property type="resolution" value="3.60 A"/>
    <property type="chains" value="D/E/F=1-511"/>
</dbReference>
<dbReference type="PDB" id="7UZF">
    <property type="method" value="EM"/>
    <property type="resolution" value="3.80 A"/>
    <property type="chains" value="D/E/F=1-511"/>
</dbReference>
<dbReference type="PDB" id="7UZG">
    <property type="method" value="EM"/>
    <property type="resolution" value="3.70 A"/>
    <property type="chains" value="D/E/F=1-511"/>
</dbReference>
<dbReference type="PDB" id="7UZH">
    <property type="method" value="EM"/>
    <property type="resolution" value="3.80 A"/>
    <property type="chains" value="D/E/F=1-511"/>
</dbReference>
<dbReference type="PDB" id="7UZI">
    <property type="method" value="EM"/>
    <property type="resolution" value="3.90 A"/>
    <property type="chains" value="D/E/F=1-511"/>
</dbReference>
<dbReference type="PDB" id="7UZJ">
    <property type="method" value="EM"/>
    <property type="resolution" value="3.30 A"/>
    <property type="chains" value="D/E/F=1-511"/>
</dbReference>
<dbReference type="PDB" id="7UZK">
    <property type="method" value="EM"/>
    <property type="resolution" value="3.00 A"/>
    <property type="chains" value="D/E/F=1-511"/>
</dbReference>
<dbReference type="PDB" id="9B8P">
    <property type="method" value="EM"/>
    <property type="resolution" value="3.20 A"/>
    <property type="chains" value="D/E/F=1-511"/>
</dbReference>
<dbReference type="PDB" id="9BRB">
    <property type="method" value="EM"/>
    <property type="resolution" value="3.60 A"/>
    <property type="chains" value="D/E/F=1-511"/>
</dbReference>
<dbReference type="PDB" id="9BRC">
    <property type="method" value="EM"/>
    <property type="resolution" value="3.90 A"/>
    <property type="chains" value="D/E/F=1-511"/>
</dbReference>
<dbReference type="PDB" id="9BRD">
    <property type="method" value="EM"/>
    <property type="resolution" value="3.50 A"/>
    <property type="chains" value="D/E/F=1-511"/>
</dbReference>
<dbReference type="PDBsum" id="6VQ6"/>
<dbReference type="PDBsum" id="6VQ7"/>
<dbReference type="PDBsum" id="6VQ8"/>
<dbReference type="PDBsum" id="6VQ9"/>
<dbReference type="PDBsum" id="6VQA"/>
<dbReference type="PDBsum" id="6VQB"/>
<dbReference type="PDBsum" id="7UZF"/>
<dbReference type="PDBsum" id="7UZG"/>
<dbReference type="PDBsum" id="7UZH"/>
<dbReference type="PDBsum" id="7UZI"/>
<dbReference type="PDBsum" id="7UZJ"/>
<dbReference type="PDBsum" id="7UZK"/>
<dbReference type="PDBsum" id="9B8P"/>
<dbReference type="PDBsum" id="9BRB"/>
<dbReference type="PDBsum" id="9BRC"/>
<dbReference type="PDBsum" id="9BRD"/>
<dbReference type="EMDB" id="EMD-21345"/>
<dbReference type="EMDB" id="EMD-21346"/>
<dbReference type="EMDB" id="EMD-21347"/>
<dbReference type="EMDB" id="EMD-26909"/>
<dbReference type="EMDB" id="EMD-26910"/>
<dbReference type="EMDB" id="EMD-26911"/>
<dbReference type="EMDB" id="EMD-26912"/>
<dbReference type="EMDB" id="EMD-26913"/>
<dbReference type="EMDB" id="EMD-26914"/>
<dbReference type="EMDB" id="EMD-44351"/>
<dbReference type="SMR" id="P62815"/>
<dbReference type="BioGRID" id="250775">
    <property type="interactions" value="5"/>
</dbReference>
<dbReference type="CORUM" id="P62815"/>
<dbReference type="FunCoup" id="P62815">
    <property type="interactions" value="3592"/>
</dbReference>
<dbReference type="IntAct" id="P62815">
    <property type="interactions" value="8"/>
</dbReference>
<dbReference type="MINT" id="P62815"/>
<dbReference type="STRING" id="10116.ENSRNOP00000015931"/>
<dbReference type="GlyGen" id="P62815">
    <property type="glycosylation" value="1 site, 1 O-linked glycan (1 site)"/>
</dbReference>
<dbReference type="iPTMnet" id="P62815"/>
<dbReference type="PhosphoSitePlus" id="P62815"/>
<dbReference type="jPOST" id="P62815"/>
<dbReference type="PaxDb" id="10116-ENSRNOP00000015931"/>
<dbReference type="Ensembl" id="ENSRNOT00000015931.7">
    <property type="protein sequence ID" value="ENSRNOP00000015931.4"/>
    <property type="gene ID" value="ENSRNOG00000011891.7"/>
</dbReference>
<dbReference type="GeneID" id="117596"/>
<dbReference type="KEGG" id="rno:117596"/>
<dbReference type="UCSC" id="RGD:620284">
    <property type="organism name" value="rat"/>
</dbReference>
<dbReference type="AGR" id="RGD:620284"/>
<dbReference type="CTD" id="526"/>
<dbReference type="RGD" id="620284">
    <property type="gene designation" value="Atp6v1b2"/>
</dbReference>
<dbReference type="eggNOG" id="KOG1351">
    <property type="taxonomic scope" value="Eukaryota"/>
</dbReference>
<dbReference type="GeneTree" id="ENSGT00940000155068"/>
<dbReference type="HOGENOM" id="CLU_022916_3_0_1"/>
<dbReference type="InParanoid" id="P62815"/>
<dbReference type="OMA" id="EGFKIKP"/>
<dbReference type="OrthoDB" id="1735853at2759"/>
<dbReference type="PhylomeDB" id="P62815"/>
<dbReference type="TreeFam" id="TF300313"/>
<dbReference type="Reactome" id="R-RNO-1222556">
    <property type="pathway name" value="ROS and RNS production in phagocytes"/>
</dbReference>
<dbReference type="Reactome" id="R-RNO-77387">
    <property type="pathway name" value="Insulin receptor recycling"/>
</dbReference>
<dbReference type="Reactome" id="R-RNO-917977">
    <property type="pathway name" value="Transferrin endocytosis and recycling"/>
</dbReference>
<dbReference type="Reactome" id="R-RNO-9639288">
    <property type="pathway name" value="Amino acids regulate mTORC1"/>
</dbReference>
<dbReference type="Reactome" id="R-RNO-983712">
    <property type="pathway name" value="Ion channel transport"/>
</dbReference>
<dbReference type="PRO" id="PR:P62815"/>
<dbReference type="Proteomes" id="UP000002494">
    <property type="component" value="Chromosome 16"/>
</dbReference>
<dbReference type="Bgee" id="ENSRNOG00000011891">
    <property type="expression patterns" value="Expressed in brain and 20 other cell types or tissues"/>
</dbReference>
<dbReference type="GO" id="GO:0016324">
    <property type="term" value="C:apical plasma membrane"/>
    <property type="evidence" value="ECO:0000250"/>
    <property type="project" value="UniProtKB"/>
</dbReference>
<dbReference type="GO" id="GO:0030665">
    <property type="term" value="C:clathrin-coated vesicle membrane"/>
    <property type="evidence" value="ECO:0007669"/>
    <property type="project" value="UniProtKB-SubCell"/>
</dbReference>
<dbReference type="GO" id="GO:0005737">
    <property type="term" value="C:cytoplasm"/>
    <property type="evidence" value="ECO:0000266"/>
    <property type="project" value="RGD"/>
</dbReference>
<dbReference type="GO" id="GO:0005829">
    <property type="term" value="C:cytosol"/>
    <property type="evidence" value="ECO:0000250"/>
    <property type="project" value="UniProtKB"/>
</dbReference>
<dbReference type="GO" id="GO:0098850">
    <property type="term" value="C:extrinsic component of synaptic vesicle membrane"/>
    <property type="evidence" value="ECO:0000314"/>
    <property type="project" value="SynGO"/>
</dbReference>
<dbReference type="GO" id="GO:0042470">
    <property type="term" value="C:melanosome"/>
    <property type="evidence" value="ECO:0007669"/>
    <property type="project" value="UniProtKB-SubCell"/>
</dbReference>
<dbReference type="GO" id="GO:0005902">
    <property type="term" value="C:microvillus"/>
    <property type="evidence" value="ECO:0000266"/>
    <property type="project" value="RGD"/>
</dbReference>
<dbReference type="GO" id="GO:0005886">
    <property type="term" value="C:plasma membrane"/>
    <property type="evidence" value="ECO:0000250"/>
    <property type="project" value="UniProtKB"/>
</dbReference>
<dbReference type="GO" id="GO:0001726">
    <property type="term" value="C:ruffle"/>
    <property type="evidence" value="ECO:0000266"/>
    <property type="project" value="RGD"/>
</dbReference>
<dbReference type="GO" id="GO:0000221">
    <property type="term" value="C:vacuolar proton-transporting V-type ATPase, V1 domain"/>
    <property type="evidence" value="ECO:0000314"/>
    <property type="project" value="UniProtKB"/>
</dbReference>
<dbReference type="GO" id="GO:0005524">
    <property type="term" value="F:ATP binding"/>
    <property type="evidence" value="ECO:0007669"/>
    <property type="project" value="UniProtKB-KW"/>
</dbReference>
<dbReference type="GO" id="GO:0046961">
    <property type="term" value="F:proton-transporting ATPase activity, rotational mechanism"/>
    <property type="evidence" value="ECO:0000318"/>
    <property type="project" value="GO_Central"/>
</dbReference>
<dbReference type="GO" id="GO:0046034">
    <property type="term" value="P:ATP metabolic process"/>
    <property type="evidence" value="ECO:0007669"/>
    <property type="project" value="InterPro"/>
</dbReference>
<dbReference type="GO" id="GO:0030641">
    <property type="term" value="P:regulation of cellular pH"/>
    <property type="evidence" value="ECO:0000304"/>
    <property type="project" value="RGD"/>
</dbReference>
<dbReference type="GO" id="GO:0097401">
    <property type="term" value="P:synaptic vesicle lumen acidification"/>
    <property type="evidence" value="ECO:0000266"/>
    <property type="project" value="RGD"/>
</dbReference>
<dbReference type="GO" id="GO:0007035">
    <property type="term" value="P:vacuolar acidification"/>
    <property type="evidence" value="ECO:0000318"/>
    <property type="project" value="GO_Central"/>
</dbReference>
<dbReference type="CDD" id="cd18112">
    <property type="entry name" value="ATP-synt_V_A-type_beta_C"/>
    <property type="match status" value="1"/>
</dbReference>
<dbReference type="CDD" id="cd18118">
    <property type="entry name" value="ATP-synt_V_A-type_beta_N"/>
    <property type="match status" value="1"/>
</dbReference>
<dbReference type="CDD" id="cd01135">
    <property type="entry name" value="V_A-ATPase_B"/>
    <property type="match status" value="1"/>
</dbReference>
<dbReference type="FunFam" id="3.40.50.12240:FF:000001">
    <property type="entry name" value="V-type proton ATPase subunit B, brain"/>
    <property type="match status" value="1"/>
</dbReference>
<dbReference type="Gene3D" id="3.40.50.12240">
    <property type="match status" value="1"/>
</dbReference>
<dbReference type="HAMAP" id="MF_00310">
    <property type="entry name" value="ATP_synth_B_arch"/>
    <property type="match status" value="1"/>
</dbReference>
<dbReference type="InterPro" id="IPR055190">
    <property type="entry name" value="ATP-synt_VA_C"/>
</dbReference>
<dbReference type="InterPro" id="IPR020003">
    <property type="entry name" value="ATPase_a/bsu_AS"/>
</dbReference>
<dbReference type="InterPro" id="IPR004100">
    <property type="entry name" value="ATPase_F1/V1/A1_a/bsu_N"/>
</dbReference>
<dbReference type="InterPro" id="IPR000194">
    <property type="entry name" value="ATPase_F1/V1/A1_a/bsu_nucl-bd"/>
</dbReference>
<dbReference type="InterPro" id="IPR005723">
    <property type="entry name" value="ATPase_V1-cplx_bsu"/>
</dbReference>
<dbReference type="InterPro" id="IPR027417">
    <property type="entry name" value="P-loop_NTPase"/>
</dbReference>
<dbReference type="InterPro" id="IPR022879">
    <property type="entry name" value="V-ATPase_su_B/beta"/>
</dbReference>
<dbReference type="NCBIfam" id="NF003235">
    <property type="entry name" value="PRK04196.1"/>
    <property type="match status" value="1"/>
</dbReference>
<dbReference type="NCBIfam" id="TIGR01040">
    <property type="entry name" value="V-ATPase_V1_B"/>
    <property type="match status" value="1"/>
</dbReference>
<dbReference type="PANTHER" id="PTHR43389">
    <property type="entry name" value="V-TYPE PROTON ATPASE SUBUNIT B"/>
    <property type="match status" value="1"/>
</dbReference>
<dbReference type="PANTHER" id="PTHR43389:SF5">
    <property type="entry name" value="V-TYPE PROTON ATPASE SUBUNIT B, BRAIN ISOFORM"/>
    <property type="match status" value="1"/>
</dbReference>
<dbReference type="Pfam" id="PF00006">
    <property type="entry name" value="ATP-synt_ab"/>
    <property type="match status" value="1"/>
</dbReference>
<dbReference type="Pfam" id="PF02874">
    <property type="entry name" value="ATP-synt_ab_N"/>
    <property type="match status" value="1"/>
</dbReference>
<dbReference type="Pfam" id="PF22919">
    <property type="entry name" value="ATP-synt_VA_C"/>
    <property type="match status" value="1"/>
</dbReference>
<dbReference type="PIRSF" id="PIRSF039114">
    <property type="entry name" value="V-ATPsynth_beta/V-ATPase_B"/>
    <property type="match status" value="1"/>
</dbReference>
<dbReference type="SUPFAM" id="SSF52540">
    <property type="entry name" value="P-loop containing nucleoside triphosphate hydrolases"/>
    <property type="match status" value="1"/>
</dbReference>
<dbReference type="PROSITE" id="PS00152">
    <property type="entry name" value="ATPASE_ALPHA_BETA"/>
    <property type="match status" value="1"/>
</dbReference>
<gene>
    <name type="primary">Atp6v1b2</name>
    <name type="synonym">Atp6b2</name>
    <name type="synonym">Vat2</name>
</gene>
<sequence length="511" mass="56551">MALRAMRGIVNGAAPELPVPTGGPMAGAREQALAVSRNYLSQPRLTYKTVSGVNGPLVILDHVKFPRYAEIVHLTLPDGTKRSGQVLEVSGSKAVVQVFEGTSGIDAKKTSCEFTGDILRTPVSEDMLGRVFNGSGKPIDRGPVVLAEDFLDIMGQPINPQCRIYPEEMIQTGISAIDGMNSIARGQKIPIFSAAGLPHNEIAAQICRQAGLVKKSKDVVDYSEENFAIVFAAMGVNMETARFFKSDFEENGSMDNVCLFLNLANDPTIERIITPRLALTTAEFLAYQCEKHVLVILTDMSSYAEALREVSAAREEVPGRRGFPGYMYTDLATIYERAGRVEGRNGSITQIPILTMPNDDITHPIPDLTGYITEGQIYVDRQLHNRQIYPPINVLPSLSRLMKSAIGEGMTRKDHADVSNQLYACYAIGKDVQAMKAVVGEEALTSDDLLYLEFLQKFEKNFITQGPYENRTVYETLDIGWQLLRIFPKEMLKRIPQSTLSEFYPRDSAKH</sequence>
<accession>P62815</accession>
<accession>O09045</accession>
<accession>P50517</accession>
<reference key="1">
    <citation type="submission" date="1997-04" db="EMBL/GenBank/DDBJ databases">
        <title>Antisense technology and bone resorption.</title>
        <authorList>
            <person name="Westberg M.S."/>
            <person name="Lundberg L.G."/>
        </authorList>
    </citation>
    <scope>NUCLEOTIDE SEQUENCE [MRNA]</scope>
    <source>
        <tissue>Brain</tissue>
    </source>
</reference>
<reference key="2">
    <citation type="journal article" date="2004" name="Genome Res.">
        <title>The status, quality, and expansion of the NIH full-length cDNA project: the Mammalian Gene Collection (MGC).</title>
        <authorList>
            <consortium name="The MGC Project Team"/>
        </authorList>
    </citation>
    <scope>NUCLEOTIDE SEQUENCE [LARGE SCALE MRNA]</scope>
    <source>
        <tissue>Kidney</tissue>
    </source>
</reference>
<reference key="3">
    <citation type="submission" date="2007-04" db="UniProtKB">
        <authorList>
            <person name="Lubec G."/>
            <person name="Chen W.-Q."/>
        </authorList>
    </citation>
    <scope>PROTEIN SEQUENCE OF 189-208; 387-400 AND 461-471</scope>
    <scope>IDENTIFICATION BY MASS SPECTROMETRY</scope>
    <source>
        <strain>Sprague-Dawley</strain>
        <tissue>Hippocampus</tissue>
    </source>
</reference>
<reference evidence="8 9 10 11 12 13" key="4">
    <citation type="journal article" date="2020" name="Science">
        <title>Structure of V-ATPase from the mammalian brain.</title>
        <authorList>
            <person name="Abbas Y.M."/>
            <person name="Wu D."/>
            <person name="Bueler S.A."/>
            <person name="Robinson C.V."/>
            <person name="Rubinstein J.L."/>
        </authorList>
    </citation>
    <scope>STRUCTURE BY ELECTRON MICROSCOPY (3.60 ANGSTROMS) IN COMPLEX WITH ADP</scope>
    <scope>FUNCTION</scope>
    <scope>IDENTIFICATION IN THE V-ATPASE COMPLEX</scope>
    <scope>SUBCELLULAR LOCATION</scope>
    <scope>IDENTIFICATION BY MASS SPECTROMETRY</scope>
    <scope>TISSUE SPECIFICITY</scope>
</reference>
<name>VATB2_RAT</name>
<organism>
    <name type="scientific">Rattus norvegicus</name>
    <name type="common">Rat</name>
    <dbReference type="NCBI Taxonomy" id="10116"/>
    <lineage>
        <taxon>Eukaryota</taxon>
        <taxon>Metazoa</taxon>
        <taxon>Chordata</taxon>
        <taxon>Craniata</taxon>
        <taxon>Vertebrata</taxon>
        <taxon>Euteleostomi</taxon>
        <taxon>Mammalia</taxon>
        <taxon>Eutheria</taxon>
        <taxon>Euarchontoglires</taxon>
        <taxon>Glires</taxon>
        <taxon>Rodentia</taxon>
        <taxon>Myomorpha</taxon>
        <taxon>Muroidea</taxon>
        <taxon>Muridae</taxon>
        <taxon>Murinae</taxon>
        <taxon>Rattus</taxon>
    </lineage>
</organism>
<protein>
    <recommendedName>
        <fullName>V-type proton ATPase subunit B, brain isoform</fullName>
        <shortName>V-ATPase subunit B 2</shortName>
    </recommendedName>
    <alternativeName>
        <fullName>Endomembrane proton pump 58 kDa subunit</fullName>
    </alternativeName>
    <alternativeName>
        <fullName>Vacuolar proton pump subunit B 2</fullName>
    </alternativeName>
</protein>